<sequence>MAAEWASRFWLWAALLIPVAAVYEDQVGKFDWRQQYVGKLKFASLEFSPGSKKLVVATEKNVIAALNSRTGEILWRHVDKGTAEGAVDAMLLHGQDVITVSNGGRIMRSWETNIGGLNWEITLDTGSFQALGLVGLQESVRYIAVLKKTTLALHHLSSGHLKWVEHLPESDSIHYQMVYSYGSGVVWALGVVPFSHVNIVKFNVEDGEIVQQVRVSTPWLQHLSGACGVVDEAVLVCPDPSSRSLQTLALETEWELRQIPLQSLDLEFGSGFQPRVLPTQPNPVDASRAQFFLHLSPSHYALLQYHYGILSLLKNFPQTALVSFATTGEKTVAAVMACRNEVQKTSNSEDGSMGSFSEKSSSKDSLACFNQTYTINLYLVETGRRLLDTTTTFSLEQSGTRPERLYIQVFLKKDDSVGYRALVQTEDHLLLFLQQLAGKVVLWSREESLAEVVCLEMVDLPLTGAQAELEGEFGKKAAIQDGLLGMFLKRLSSQLILLQAWTSHLWKMFYDARKPRSQIKNEINIDTLARDEFNLQKMMVMVTASGKLFGIESSSGTILWKQYLPSVKPDSSFKLMVQRTTAHFPHPPQCTLLVKDKESGMSSLYVFNPIFGKWSQVAPPVLKRPILQSLLLPVMDQDYAKVLLLIDDEYKVTAFPATRNVLRQLHELAPSIFFYLVDAEQGRLCGYRLRKDLTTELSWELTIPPEVRRIVKVKGKRSSEHVHSQGRVMGDRSVLYKSLNPNLLAVVTESTDAHHERTFIGIFLIDGVTGRIIHSSAQKKAKGPVHIVHSENWVVYQYWNTKARRNEFTVLELYEGTEQYNATAFSSLDRPQLPQVLQQSYIFPSSISAMEATITERGITSRHLLIGLPSGAILSLPKALLDPRRPEIPTEQSREENLIPYSPDVQIHAERFINYNQTVSRMRGIYTAPSGLESTCLVVAYGLDIYQTRVYPSKQFDVLKDDYDYVLISSVLFGLVFATMITKRLAQVKLLNRAWR</sequence>
<protein>
    <recommendedName>
        <fullName>ER membrane protein complex subunit 1</fullName>
    </recommendedName>
</protein>
<organism>
    <name type="scientific">Pongo abelii</name>
    <name type="common">Sumatran orangutan</name>
    <name type="synonym">Pongo pygmaeus abelii</name>
    <dbReference type="NCBI Taxonomy" id="9601"/>
    <lineage>
        <taxon>Eukaryota</taxon>
        <taxon>Metazoa</taxon>
        <taxon>Chordata</taxon>
        <taxon>Craniata</taxon>
        <taxon>Vertebrata</taxon>
        <taxon>Euteleostomi</taxon>
        <taxon>Mammalia</taxon>
        <taxon>Eutheria</taxon>
        <taxon>Euarchontoglires</taxon>
        <taxon>Primates</taxon>
        <taxon>Haplorrhini</taxon>
        <taxon>Catarrhini</taxon>
        <taxon>Hominidae</taxon>
        <taxon>Pongo</taxon>
    </lineage>
</organism>
<reference key="1">
    <citation type="submission" date="2004-11" db="EMBL/GenBank/DDBJ databases">
        <authorList>
            <consortium name="The German cDNA consortium"/>
        </authorList>
    </citation>
    <scope>NUCLEOTIDE SEQUENCE [LARGE SCALE MRNA]</scope>
    <source>
        <tissue>Brain cortex</tissue>
    </source>
</reference>
<dbReference type="EMBL" id="CR858637">
    <property type="protein sequence ID" value="CAH90853.1"/>
    <property type="molecule type" value="mRNA"/>
</dbReference>
<dbReference type="EMBL" id="CR860109">
    <property type="protein sequence ID" value="CAH92254.1"/>
    <property type="molecule type" value="mRNA"/>
</dbReference>
<dbReference type="RefSeq" id="NP_001126319.1">
    <property type="nucleotide sequence ID" value="NM_001132847.1"/>
</dbReference>
<dbReference type="SMR" id="Q5R7K6"/>
<dbReference type="FunCoup" id="Q5R7K6">
    <property type="interactions" value="2921"/>
</dbReference>
<dbReference type="STRING" id="9601.ENSPPYP00000002080"/>
<dbReference type="GlyCosmos" id="Q5R7K6">
    <property type="glycosylation" value="1 site, No reported glycans"/>
</dbReference>
<dbReference type="GeneID" id="100173298"/>
<dbReference type="KEGG" id="pon:100173298"/>
<dbReference type="CTD" id="23065"/>
<dbReference type="eggNOG" id="KOG2103">
    <property type="taxonomic scope" value="Eukaryota"/>
</dbReference>
<dbReference type="InParanoid" id="Q5R7K6"/>
<dbReference type="OrthoDB" id="28092at2759"/>
<dbReference type="Proteomes" id="UP000001595">
    <property type="component" value="Unplaced"/>
</dbReference>
<dbReference type="GO" id="GO:0072546">
    <property type="term" value="C:EMC complex"/>
    <property type="evidence" value="ECO:0000250"/>
    <property type="project" value="UniProtKB"/>
</dbReference>
<dbReference type="GO" id="GO:0005789">
    <property type="term" value="C:endoplasmic reticulum membrane"/>
    <property type="evidence" value="ECO:0000250"/>
    <property type="project" value="UniProtKB"/>
</dbReference>
<dbReference type="GO" id="GO:0016020">
    <property type="term" value="C:membrane"/>
    <property type="evidence" value="ECO:0000250"/>
    <property type="project" value="UniProtKB"/>
</dbReference>
<dbReference type="GO" id="GO:0034975">
    <property type="term" value="P:protein folding in endoplasmic reticulum"/>
    <property type="evidence" value="ECO:0007669"/>
    <property type="project" value="TreeGrafter"/>
</dbReference>
<dbReference type="GO" id="GO:0045050">
    <property type="term" value="P:protein insertion into ER membrane by stop-transfer membrane-anchor sequence"/>
    <property type="evidence" value="ECO:0000250"/>
    <property type="project" value="UniProtKB"/>
</dbReference>
<dbReference type="GO" id="GO:0071816">
    <property type="term" value="P:tail-anchored membrane protein insertion into ER membrane"/>
    <property type="evidence" value="ECO:0000250"/>
    <property type="project" value="UniProtKB"/>
</dbReference>
<dbReference type="FunFam" id="2.130.10.10:FF:000163">
    <property type="entry name" value="ER membrane protein complex subunit 1 isoform X2"/>
    <property type="match status" value="1"/>
</dbReference>
<dbReference type="Gene3D" id="2.130.10.10">
    <property type="entry name" value="YVTN repeat-like/Quinoprotein amine dehydrogenase"/>
    <property type="match status" value="1"/>
</dbReference>
<dbReference type="InterPro" id="IPR026895">
    <property type="entry name" value="EMC1"/>
</dbReference>
<dbReference type="InterPro" id="IPR011678">
    <property type="entry name" value="EMC1_C"/>
</dbReference>
<dbReference type="InterPro" id="IPR011047">
    <property type="entry name" value="Quinoprotein_ADH-like_sf"/>
</dbReference>
<dbReference type="InterPro" id="IPR015943">
    <property type="entry name" value="WD40/YVTN_repeat-like_dom_sf"/>
</dbReference>
<dbReference type="PANTHER" id="PTHR21573">
    <property type="entry name" value="ER MEMBRANE PROTEIN COMPLEX SUBUNIT 1"/>
    <property type="match status" value="1"/>
</dbReference>
<dbReference type="PANTHER" id="PTHR21573:SF0">
    <property type="entry name" value="ER MEMBRANE PROTEIN COMPLEX SUBUNIT 1"/>
    <property type="match status" value="1"/>
</dbReference>
<dbReference type="Pfam" id="PF25293">
    <property type="entry name" value="Beta-prop_EMC1_N"/>
    <property type="match status" value="1"/>
</dbReference>
<dbReference type="Pfam" id="PF07774">
    <property type="entry name" value="EMC1_C"/>
    <property type="match status" value="1"/>
</dbReference>
<dbReference type="SUPFAM" id="SSF50998">
    <property type="entry name" value="Quinoprotein alcohol dehydrogenase-like"/>
    <property type="match status" value="1"/>
</dbReference>
<feature type="signal peptide" evidence="1">
    <location>
        <begin position="1"/>
        <end position="22"/>
    </location>
</feature>
<feature type="chain" id="PRO_0000248599" description="ER membrane protein complex subunit 1">
    <location>
        <begin position="23"/>
        <end position="996"/>
    </location>
</feature>
<feature type="topological domain" description="Lumenal" evidence="1">
    <location>
        <begin position="23"/>
        <end position="965"/>
    </location>
</feature>
<feature type="transmembrane region" description="Helical" evidence="1">
    <location>
        <begin position="966"/>
        <end position="986"/>
    </location>
</feature>
<feature type="topological domain" description="Cytoplasmic" evidence="1">
    <location>
        <begin position="987"/>
        <end position="996"/>
    </location>
</feature>
<feature type="glycosylation site" description="N-linked (GlcNAc...) asparagine" evidence="2">
    <location>
        <position position="916"/>
    </location>
</feature>
<feature type="disulfide bond" evidence="1">
    <location>
        <begin position="227"/>
        <end position="237"/>
    </location>
</feature>
<feature type="disulfide bond" evidence="1">
    <location>
        <begin position="338"/>
        <end position="368"/>
    </location>
</feature>
<feature type="sequence conflict" description="In Ref. 1; CAH90853." evidence="3" ref="1">
    <original>V</original>
    <variation>F</variation>
    <location>
        <position position="661"/>
    </location>
</feature>
<feature type="sequence conflict" description="In Ref. 1; CAH90853." evidence="3" ref="1">
    <original>R</original>
    <variation>Q</variation>
    <location>
        <position position="708"/>
    </location>
</feature>
<feature type="sequence conflict" description="In Ref. 1; CAH90853." evidence="3" ref="1">
    <original>A</original>
    <variation>V</variation>
    <location>
        <position position="777"/>
    </location>
</feature>
<comment type="function">
    <text evidence="1">Part of the endoplasmic reticulum membrane protein complex (EMC) that enables the energy-independent insertion into endoplasmic reticulum membranes of newly synthesized membrane proteins. Preferentially accommodates proteins with transmembrane domains that are weakly hydrophobic or contain destabilizing features such as charged and aromatic residues. Involved in the cotranslational insertion of multi-pass membrane proteins in which stop-transfer membrane-anchor sequences become ER membrane spanning helices. It is also required for the post-translational insertion of tail-anchored/TA proteins in endoplasmic reticulum membranes. By mediating the proper cotranslational insertion of N-terminal transmembrane domains in an N-exo topology, with translocated N-terminus in the lumen of the ER, controls the topology of multi-pass membrane proteins like the G protein-coupled receptors. By regulating the insertion of various proteins in membranes, it is indirectly involved in many cellular processes.</text>
</comment>
<comment type="subunit">
    <text evidence="1">Component of the ER membrane protein complex (EMC).</text>
</comment>
<comment type="subcellular location">
    <subcellularLocation>
        <location evidence="1">Endoplasmic reticulum membrane</location>
        <topology evidence="1">Single-pass type I membrane protein</topology>
    </subcellularLocation>
</comment>
<comment type="similarity">
    <text evidence="3">Belongs to the EMC1 family.</text>
</comment>
<evidence type="ECO:0000250" key="1">
    <source>
        <dbReference type="UniProtKB" id="Q8N766"/>
    </source>
</evidence>
<evidence type="ECO:0000255" key="2"/>
<evidence type="ECO:0000305" key="3"/>
<gene>
    <name type="primary">EMC1</name>
</gene>
<accession>Q5R7K6</accession>
<accession>Q5RBK7</accession>
<name>EMC1_PONAB</name>
<proteinExistence type="evidence at transcript level"/>
<keyword id="KW-1015">Disulfide bond</keyword>
<keyword id="KW-0256">Endoplasmic reticulum</keyword>
<keyword id="KW-0325">Glycoprotein</keyword>
<keyword id="KW-0472">Membrane</keyword>
<keyword id="KW-1185">Reference proteome</keyword>
<keyword id="KW-0732">Signal</keyword>
<keyword id="KW-0812">Transmembrane</keyword>
<keyword id="KW-1133">Transmembrane helix</keyword>